<dbReference type="EC" id="2.7.8.13" evidence="1"/>
<dbReference type="EMBL" id="CP000384">
    <property type="protein sequence ID" value="ABG09366.1"/>
    <property type="molecule type" value="Genomic_DNA"/>
</dbReference>
<dbReference type="SMR" id="Q1B6W8"/>
<dbReference type="KEGG" id="mmc:Mmcs_3259"/>
<dbReference type="HOGENOM" id="CLU_023982_0_1_11"/>
<dbReference type="BioCyc" id="MSP164756:G1G6O-3325-MONOMER"/>
<dbReference type="UniPathway" id="UPA00219"/>
<dbReference type="GO" id="GO:0005886">
    <property type="term" value="C:plasma membrane"/>
    <property type="evidence" value="ECO:0007669"/>
    <property type="project" value="UniProtKB-SubCell"/>
</dbReference>
<dbReference type="GO" id="GO:0046872">
    <property type="term" value="F:metal ion binding"/>
    <property type="evidence" value="ECO:0007669"/>
    <property type="project" value="UniProtKB-KW"/>
</dbReference>
<dbReference type="GO" id="GO:0008963">
    <property type="term" value="F:phospho-N-acetylmuramoyl-pentapeptide-transferase activity"/>
    <property type="evidence" value="ECO:0007669"/>
    <property type="project" value="UniProtKB-UniRule"/>
</dbReference>
<dbReference type="GO" id="GO:0051992">
    <property type="term" value="F:UDP-N-acetylmuramoyl-L-alanyl-D-glutamyl-meso-2,6-diaminopimelyl-D-alanyl-D-alanine:undecaprenyl-phosphate transferase activity"/>
    <property type="evidence" value="ECO:0007669"/>
    <property type="project" value="RHEA"/>
</dbReference>
<dbReference type="GO" id="GO:0051301">
    <property type="term" value="P:cell division"/>
    <property type="evidence" value="ECO:0007669"/>
    <property type="project" value="UniProtKB-KW"/>
</dbReference>
<dbReference type="GO" id="GO:0071555">
    <property type="term" value="P:cell wall organization"/>
    <property type="evidence" value="ECO:0007669"/>
    <property type="project" value="UniProtKB-KW"/>
</dbReference>
<dbReference type="GO" id="GO:0009252">
    <property type="term" value="P:peptidoglycan biosynthetic process"/>
    <property type="evidence" value="ECO:0007669"/>
    <property type="project" value="UniProtKB-UniRule"/>
</dbReference>
<dbReference type="GO" id="GO:0008360">
    <property type="term" value="P:regulation of cell shape"/>
    <property type="evidence" value="ECO:0007669"/>
    <property type="project" value="UniProtKB-KW"/>
</dbReference>
<dbReference type="CDD" id="cd06852">
    <property type="entry name" value="GT_MraY"/>
    <property type="match status" value="1"/>
</dbReference>
<dbReference type="HAMAP" id="MF_00038">
    <property type="entry name" value="MraY"/>
    <property type="match status" value="1"/>
</dbReference>
<dbReference type="InterPro" id="IPR000715">
    <property type="entry name" value="Glycosyl_transferase_4"/>
</dbReference>
<dbReference type="InterPro" id="IPR003524">
    <property type="entry name" value="PNAcMuramoyl-5peptid_Trfase"/>
</dbReference>
<dbReference type="InterPro" id="IPR018480">
    <property type="entry name" value="PNAcMuramoyl-5peptid_Trfase_CS"/>
</dbReference>
<dbReference type="NCBIfam" id="TIGR00445">
    <property type="entry name" value="mraY"/>
    <property type="match status" value="1"/>
</dbReference>
<dbReference type="PANTHER" id="PTHR22926">
    <property type="entry name" value="PHOSPHO-N-ACETYLMURAMOYL-PENTAPEPTIDE-TRANSFERASE"/>
    <property type="match status" value="1"/>
</dbReference>
<dbReference type="PANTHER" id="PTHR22926:SF5">
    <property type="entry name" value="PHOSPHO-N-ACETYLMURAMOYL-PENTAPEPTIDE-TRANSFERASE HOMOLOG"/>
    <property type="match status" value="1"/>
</dbReference>
<dbReference type="Pfam" id="PF00953">
    <property type="entry name" value="Glycos_transf_4"/>
    <property type="match status" value="1"/>
</dbReference>
<dbReference type="Pfam" id="PF10555">
    <property type="entry name" value="MraY_sig1"/>
    <property type="match status" value="1"/>
</dbReference>
<dbReference type="PROSITE" id="PS01347">
    <property type="entry name" value="MRAY_1"/>
    <property type="match status" value="1"/>
</dbReference>
<dbReference type="PROSITE" id="PS01348">
    <property type="entry name" value="MRAY_2"/>
    <property type="match status" value="1"/>
</dbReference>
<name>MRAY_MYCSS</name>
<reference key="1">
    <citation type="submission" date="2006-06" db="EMBL/GenBank/DDBJ databases">
        <title>Complete sequence of chromosome of Mycobacterium sp. MCS.</title>
        <authorList>
            <consortium name="US DOE Joint Genome Institute"/>
            <person name="Copeland A."/>
            <person name="Lucas S."/>
            <person name="Lapidus A."/>
            <person name="Barry K."/>
            <person name="Detter J.C."/>
            <person name="Glavina del Rio T."/>
            <person name="Hammon N."/>
            <person name="Israni S."/>
            <person name="Dalin E."/>
            <person name="Tice H."/>
            <person name="Pitluck S."/>
            <person name="Martinez M."/>
            <person name="Schmutz J."/>
            <person name="Larimer F."/>
            <person name="Land M."/>
            <person name="Hauser L."/>
            <person name="Kyrpides N."/>
            <person name="Kim E."/>
            <person name="Miller C.D."/>
            <person name="Hughes J.E."/>
            <person name="Anderson A.J."/>
            <person name="Sims R.C."/>
            <person name="Richardson P."/>
        </authorList>
    </citation>
    <scope>NUCLEOTIDE SEQUENCE [LARGE SCALE GENOMIC DNA]</scope>
    <source>
        <strain>MCS</strain>
    </source>
</reference>
<protein>
    <recommendedName>
        <fullName evidence="1">Phospho-N-acetylmuramoyl-pentapeptide-transferase</fullName>
        <ecNumber evidence="1">2.7.8.13</ecNumber>
    </recommendedName>
    <alternativeName>
        <fullName evidence="1">UDP-MurNAc-pentapeptide phosphotransferase</fullName>
    </alternativeName>
</protein>
<accession>Q1B6W8</accession>
<organism>
    <name type="scientific">Mycobacterium sp. (strain MCS)</name>
    <dbReference type="NCBI Taxonomy" id="164756"/>
    <lineage>
        <taxon>Bacteria</taxon>
        <taxon>Bacillati</taxon>
        <taxon>Actinomycetota</taxon>
        <taxon>Actinomycetes</taxon>
        <taxon>Mycobacteriales</taxon>
        <taxon>Mycobacteriaceae</taxon>
        <taxon>Mycobacterium</taxon>
    </lineage>
</organism>
<keyword id="KW-0131">Cell cycle</keyword>
<keyword id="KW-0132">Cell division</keyword>
<keyword id="KW-1003">Cell membrane</keyword>
<keyword id="KW-0133">Cell shape</keyword>
<keyword id="KW-0961">Cell wall biogenesis/degradation</keyword>
<keyword id="KW-0460">Magnesium</keyword>
<keyword id="KW-0472">Membrane</keyword>
<keyword id="KW-0479">Metal-binding</keyword>
<keyword id="KW-0573">Peptidoglycan synthesis</keyword>
<keyword id="KW-0808">Transferase</keyword>
<keyword id="KW-0812">Transmembrane</keyword>
<keyword id="KW-1133">Transmembrane helix</keyword>
<evidence type="ECO:0000255" key="1">
    <source>
        <dbReference type="HAMAP-Rule" id="MF_00038"/>
    </source>
</evidence>
<sequence length="359" mass="37686">MRQILIAVGLALAVSILLTPVLIRLFTRQGFGHEIREDGPPTHHKKRGTPSMGGVAILAGIWVSYLGTHLVGLALDGEGPSASGLLVLGLATALGIVGFIDDLIKIRRARNLGLNKTAKTVGILAAALLFGVLALQFGNADGLTPGSPELSYVREIATVTLAPMIFVLFCVVLVSAWSNAVNFTDGLDGLAAGAMAMVCAAYVLITFWQYRNACATSPGLGCYNVRDPLDLALVAAAAAGACIGFLWWNAAPAKIFMGDTGSLALGGIIAGLSVTSRTEILAVVLGALFVAEVTSVVVQILAFRTTGRRVFRMAPFHHHFELVGWAETTVIIRFWLLTAIACGLGVALFYGEWLTAVGA</sequence>
<proteinExistence type="inferred from homology"/>
<gene>
    <name evidence="1" type="primary">mraY</name>
    <name type="ordered locus">Mmcs_3259</name>
</gene>
<comment type="function">
    <text evidence="1">Catalyzes the initial step of the lipid cycle reactions in the biosynthesis of the cell wall peptidoglycan: transfers peptidoglycan precursor phospho-MurNAc-pentapeptide from UDP-MurNAc-pentapeptide onto the lipid carrier undecaprenyl phosphate, yielding undecaprenyl-pyrophosphoryl-MurNAc-pentapeptide, known as lipid I.</text>
</comment>
<comment type="catalytic activity">
    <reaction evidence="1">
        <text>UDP-N-acetyl-alpha-D-muramoyl-L-alanyl-gamma-D-glutamyl-meso-2,6-diaminopimeloyl-D-alanyl-D-alanine + di-trans,octa-cis-undecaprenyl phosphate = di-trans,octa-cis-undecaprenyl diphospho-N-acetyl-alpha-D-muramoyl-L-alanyl-D-glutamyl-meso-2,6-diaminopimeloyl-D-alanyl-D-alanine + UMP</text>
        <dbReference type="Rhea" id="RHEA:28386"/>
        <dbReference type="ChEBI" id="CHEBI:57865"/>
        <dbReference type="ChEBI" id="CHEBI:60392"/>
        <dbReference type="ChEBI" id="CHEBI:61386"/>
        <dbReference type="ChEBI" id="CHEBI:61387"/>
        <dbReference type="EC" id="2.7.8.13"/>
    </reaction>
</comment>
<comment type="cofactor">
    <cofactor evidence="1">
        <name>Mg(2+)</name>
        <dbReference type="ChEBI" id="CHEBI:18420"/>
    </cofactor>
</comment>
<comment type="pathway">
    <text evidence="1">Cell wall biogenesis; peptidoglycan biosynthesis.</text>
</comment>
<comment type="subcellular location">
    <subcellularLocation>
        <location evidence="1">Cell membrane</location>
        <topology evidence="1">Multi-pass membrane protein</topology>
    </subcellularLocation>
</comment>
<comment type="similarity">
    <text evidence="1">Belongs to the glycosyltransferase 4 family. MraY subfamily.</text>
</comment>
<feature type="chain" id="PRO_1000003015" description="Phospho-N-acetylmuramoyl-pentapeptide-transferase">
    <location>
        <begin position="1"/>
        <end position="359"/>
    </location>
</feature>
<feature type="transmembrane region" description="Helical" evidence="1">
    <location>
        <begin position="3"/>
        <end position="23"/>
    </location>
</feature>
<feature type="transmembrane region" description="Helical" evidence="1">
    <location>
        <begin position="55"/>
        <end position="75"/>
    </location>
</feature>
<feature type="transmembrane region" description="Helical" evidence="1">
    <location>
        <begin position="84"/>
        <end position="104"/>
    </location>
</feature>
<feature type="transmembrane region" description="Helical" evidence="1">
    <location>
        <begin position="120"/>
        <end position="140"/>
    </location>
</feature>
<feature type="transmembrane region" description="Helical" evidence="1">
    <location>
        <begin position="156"/>
        <end position="176"/>
    </location>
</feature>
<feature type="transmembrane region" description="Helical" evidence="1">
    <location>
        <begin position="187"/>
        <end position="207"/>
    </location>
</feature>
<feature type="transmembrane region" description="Helical" evidence="1">
    <location>
        <begin position="231"/>
        <end position="251"/>
    </location>
</feature>
<feature type="transmembrane region" description="Helical" evidence="1">
    <location>
        <begin position="255"/>
        <end position="275"/>
    </location>
</feature>
<feature type="transmembrane region" description="Helical" evidence="1">
    <location>
        <begin position="280"/>
        <end position="300"/>
    </location>
</feature>
<feature type="transmembrane region" description="Helical" evidence="1">
    <location>
        <begin position="334"/>
        <end position="354"/>
    </location>
</feature>